<reference key="1">
    <citation type="journal article" date="1998" name="Nature">
        <title>Deciphering the biology of Mycobacterium tuberculosis from the complete genome sequence.</title>
        <authorList>
            <person name="Cole S.T."/>
            <person name="Brosch R."/>
            <person name="Parkhill J."/>
            <person name="Garnier T."/>
            <person name="Churcher C.M."/>
            <person name="Harris D.E."/>
            <person name="Gordon S.V."/>
            <person name="Eiglmeier K."/>
            <person name="Gas S."/>
            <person name="Barry C.E. III"/>
            <person name="Tekaia F."/>
            <person name="Badcock K."/>
            <person name="Basham D."/>
            <person name="Brown D."/>
            <person name="Chillingworth T."/>
            <person name="Connor R."/>
            <person name="Davies R.M."/>
            <person name="Devlin K."/>
            <person name="Feltwell T."/>
            <person name="Gentles S."/>
            <person name="Hamlin N."/>
            <person name="Holroyd S."/>
            <person name="Hornsby T."/>
            <person name="Jagels K."/>
            <person name="Krogh A."/>
            <person name="McLean J."/>
            <person name="Moule S."/>
            <person name="Murphy L.D."/>
            <person name="Oliver S."/>
            <person name="Osborne J."/>
            <person name="Quail M.A."/>
            <person name="Rajandream M.A."/>
            <person name="Rogers J."/>
            <person name="Rutter S."/>
            <person name="Seeger K."/>
            <person name="Skelton S."/>
            <person name="Squares S."/>
            <person name="Squares R."/>
            <person name="Sulston J.E."/>
            <person name="Taylor K."/>
            <person name="Whitehead S."/>
            <person name="Barrell B.G."/>
        </authorList>
    </citation>
    <scope>NUCLEOTIDE SEQUENCE [LARGE SCALE GENOMIC DNA]</scope>
    <source>
        <strain>ATCC 25618 / H37Rv</strain>
    </source>
</reference>
<reference key="2">
    <citation type="journal article" date="2011" name="Mol. Cell. Proteomics">
        <title>Proteogenomic analysis of Mycobacterium tuberculosis by high resolution mass spectrometry.</title>
        <authorList>
            <person name="Kelkar D.S."/>
            <person name="Kumar D."/>
            <person name="Kumar P."/>
            <person name="Balakrishnan L."/>
            <person name="Muthusamy B."/>
            <person name="Yadav A.K."/>
            <person name="Shrivastava P."/>
            <person name="Marimuthu A."/>
            <person name="Anand S."/>
            <person name="Sundaram H."/>
            <person name="Kingsbury R."/>
            <person name="Harsha H.C."/>
            <person name="Nair B."/>
            <person name="Prasad T.S."/>
            <person name="Chauhan D.S."/>
            <person name="Katoch K."/>
            <person name="Katoch V.M."/>
            <person name="Kumar P."/>
            <person name="Chaerkady R."/>
            <person name="Ramachandran S."/>
            <person name="Dash D."/>
            <person name="Pandey A."/>
        </authorList>
    </citation>
    <scope>IDENTIFICATION BY MASS SPECTROMETRY [LARGE SCALE ANALYSIS]</scope>
    <source>
        <strain>ATCC 25618 / H37Rv</strain>
    </source>
</reference>
<keyword id="KW-1003">Cell membrane</keyword>
<keyword id="KW-0472">Membrane</keyword>
<keyword id="KW-0520">NAD</keyword>
<keyword id="KW-0874">Quinone</keyword>
<keyword id="KW-1185">Reference proteome</keyword>
<keyword id="KW-1278">Translocase</keyword>
<keyword id="KW-0812">Transmembrane</keyword>
<keyword id="KW-1133">Transmembrane helix</keyword>
<name>NUOM_MYCTU</name>
<dbReference type="EC" id="7.1.1.-"/>
<dbReference type="EMBL" id="AL123456">
    <property type="protein sequence ID" value="CCP45968.1"/>
    <property type="molecule type" value="Genomic_DNA"/>
</dbReference>
<dbReference type="PIR" id="C70946">
    <property type="entry name" value="C70946"/>
</dbReference>
<dbReference type="RefSeq" id="NP_217673.1">
    <property type="nucleotide sequence ID" value="NC_000962.3"/>
</dbReference>
<dbReference type="RefSeq" id="WP_003416460.1">
    <property type="nucleotide sequence ID" value="NZ_NVQJ01000019.1"/>
</dbReference>
<dbReference type="SMR" id="P9WIW5"/>
<dbReference type="FunCoup" id="P9WIW5">
    <property type="interactions" value="78"/>
</dbReference>
<dbReference type="STRING" id="83332.Rv3157"/>
<dbReference type="PaxDb" id="83332-Rv3157"/>
<dbReference type="DNASU" id="888765"/>
<dbReference type="GeneID" id="888765"/>
<dbReference type="KEGG" id="mtu:Rv3157"/>
<dbReference type="KEGG" id="mtv:RVBD_3157"/>
<dbReference type="PATRIC" id="fig|83332.111.peg.3516"/>
<dbReference type="TubercuList" id="Rv3157"/>
<dbReference type="eggNOG" id="COG1008">
    <property type="taxonomic scope" value="Bacteria"/>
</dbReference>
<dbReference type="InParanoid" id="P9WIW5"/>
<dbReference type="OrthoDB" id="9768329at2"/>
<dbReference type="PhylomeDB" id="P9WIW5"/>
<dbReference type="Proteomes" id="UP000001584">
    <property type="component" value="Chromosome"/>
</dbReference>
<dbReference type="GO" id="GO:0005886">
    <property type="term" value="C:plasma membrane"/>
    <property type="evidence" value="ECO:0007669"/>
    <property type="project" value="UniProtKB-SubCell"/>
</dbReference>
<dbReference type="GO" id="GO:0045271">
    <property type="term" value="C:respiratory chain complex I"/>
    <property type="evidence" value="ECO:0000318"/>
    <property type="project" value="GO_Central"/>
</dbReference>
<dbReference type="GO" id="GO:0008137">
    <property type="term" value="F:NADH dehydrogenase (ubiquinone) activity"/>
    <property type="evidence" value="ECO:0007669"/>
    <property type="project" value="InterPro"/>
</dbReference>
<dbReference type="GO" id="GO:0048039">
    <property type="term" value="F:ubiquinone binding"/>
    <property type="evidence" value="ECO:0000318"/>
    <property type="project" value="GO_Central"/>
</dbReference>
<dbReference type="GO" id="GO:0009060">
    <property type="term" value="P:aerobic respiration"/>
    <property type="evidence" value="ECO:0000318"/>
    <property type="project" value="GO_Central"/>
</dbReference>
<dbReference type="GO" id="GO:0042773">
    <property type="term" value="P:ATP synthesis coupled electron transport"/>
    <property type="evidence" value="ECO:0007669"/>
    <property type="project" value="InterPro"/>
</dbReference>
<dbReference type="GO" id="GO:0015990">
    <property type="term" value="P:electron transport coupled proton transport"/>
    <property type="evidence" value="ECO:0000318"/>
    <property type="project" value="GO_Central"/>
</dbReference>
<dbReference type="InterPro" id="IPR010227">
    <property type="entry name" value="NADH_Q_OxRdtase_chainM/4"/>
</dbReference>
<dbReference type="InterPro" id="IPR003918">
    <property type="entry name" value="NADH_UbQ_OxRdtase"/>
</dbReference>
<dbReference type="InterPro" id="IPR001750">
    <property type="entry name" value="ND/Mrp_TM"/>
</dbReference>
<dbReference type="NCBIfam" id="TIGR01972">
    <property type="entry name" value="NDH_I_M"/>
    <property type="match status" value="1"/>
</dbReference>
<dbReference type="NCBIfam" id="NF004500">
    <property type="entry name" value="PRK05846.1-4"/>
    <property type="match status" value="1"/>
</dbReference>
<dbReference type="PANTHER" id="PTHR43507">
    <property type="entry name" value="NADH-UBIQUINONE OXIDOREDUCTASE CHAIN 4"/>
    <property type="match status" value="1"/>
</dbReference>
<dbReference type="PANTHER" id="PTHR43507:SF1">
    <property type="entry name" value="NADH-UBIQUINONE OXIDOREDUCTASE CHAIN 4"/>
    <property type="match status" value="1"/>
</dbReference>
<dbReference type="Pfam" id="PF00361">
    <property type="entry name" value="Proton_antipo_M"/>
    <property type="match status" value="1"/>
</dbReference>
<dbReference type="PRINTS" id="PR01437">
    <property type="entry name" value="NUOXDRDTASE4"/>
</dbReference>
<protein>
    <recommendedName>
        <fullName>NADH-quinone oxidoreductase subunit M</fullName>
        <ecNumber>7.1.1.-</ecNumber>
    </recommendedName>
    <alternativeName>
        <fullName>NADH dehydrogenase I subunit M</fullName>
    </alternativeName>
    <alternativeName>
        <fullName>NDH-1 subunit M</fullName>
    </alternativeName>
</protein>
<organism>
    <name type="scientific">Mycobacterium tuberculosis (strain ATCC 25618 / H37Rv)</name>
    <dbReference type="NCBI Taxonomy" id="83332"/>
    <lineage>
        <taxon>Bacteria</taxon>
        <taxon>Bacillati</taxon>
        <taxon>Actinomycetota</taxon>
        <taxon>Actinomycetes</taxon>
        <taxon>Mycobacteriales</taxon>
        <taxon>Mycobacteriaceae</taxon>
        <taxon>Mycobacterium</taxon>
        <taxon>Mycobacterium tuberculosis complex</taxon>
    </lineage>
</organism>
<proteinExistence type="evidence at protein level"/>
<comment type="function">
    <text evidence="1">NDH-1 shuttles electrons from NADH, via FMN and iron-sulfur (Fe-S) centers, to quinones in the respiratory chain. The immediate electron acceptor for the enzyme in this species is believed to be menaquinone. Couples the redox reaction to proton translocation (for every two electrons transferred, four hydrogen ions are translocated across the cytoplasmic membrane), and thus conserves the redox energy in a proton gradient (By similarity).</text>
</comment>
<comment type="catalytic activity">
    <reaction>
        <text>a quinone + NADH + 5 H(+)(in) = a quinol + NAD(+) + 4 H(+)(out)</text>
        <dbReference type="Rhea" id="RHEA:57888"/>
        <dbReference type="ChEBI" id="CHEBI:15378"/>
        <dbReference type="ChEBI" id="CHEBI:24646"/>
        <dbReference type="ChEBI" id="CHEBI:57540"/>
        <dbReference type="ChEBI" id="CHEBI:57945"/>
        <dbReference type="ChEBI" id="CHEBI:132124"/>
    </reaction>
</comment>
<comment type="subcellular location">
    <subcellularLocation>
        <location evidence="4">Cell membrane</location>
        <topology evidence="4">Multi-pass membrane protein</topology>
    </subcellularLocation>
</comment>
<comment type="similarity">
    <text evidence="4">Belongs to the complex I subunit 4 family.</text>
</comment>
<evidence type="ECO:0000250" key="1"/>
<evidence type="ECO:0000255" key="2"/>
<evidence type="ECO:0000256" key="3">
    <source>
        <dbReference type="SAM" id="MobiDB-lite"/>
    </source>
</evidence>
<evidence type="ECO:0000305" key="4"/>
<sequence length="553" mass="59207">MNNVPWLSVLWLVPLAGAVLIILLPPGRRRLAKWAGMVVSVLTLAVSIVVAAEFKPSAEPYQFVEKHSWIPAFGAGYTLGVDGIAVVLVLLTTVLIPLLLVAGWNDATDADDLSPASGRYPQRPAPPRLRSSGGERTRGVHAYVALTLAIESMVLMSVIALDVLLFYVFFEAMLIPMYFLIGGFGQGAGRSRAAVKFLLYNLFGGLIMLAAVIGLYVVTAQYDSGTFDFREIVAGVAAGRYGADPAVFKALFLGFMFAFAIKAPLWPFHRWLPDAAVESTPATAVLMMAVMDKVGTFGMLRYCLQLFPDPSTYFRPLIVTLAIIGVIYGAIVAIGQTDMMRLIAYTSISHFGFIIAGIFVMTTQGQSGSTLYMLNHGLSTAAVFLIAGFLIARRGSRSIADYGGVQKVAPILAGTFMVSAMATVSLPGLAPFISEFLVLLGTFSRYWLAAAFGVTALVLSAVYMLWLYQRVMTGPVAEGNERIGDLVGREMIVVAPLIALLLVLGVYPKPVLDIINPAVENTMTTIGQHDPAPSVAHPVPAVGASRTAEGPHP</sequence>
<accession>P9WIW5</accession>
<accession>L0TC01</accession>
<accession>O53307</accession>
<gene>
    <name type="primary">nuoM</name>
    <name type="ordered locus">Rv3157</name>
    <name type="ORF">MTCY03A2.01c</name>
    <name type="ORF">MTV014.01c</name>
</gene>
<feature type="chain" id="PRO_0000118044" description="NADH-quinone oxidoreductase subunit M">
    <location>
        <begin position="1"/>
        <end position="553"/>
    </location>
</feature>
<feature type="transmembrane region" description="Helical" evidence="2">
    <location>
        <begin position="4"/>
        <end position="24"/>
    </location>
</feature>
<feature type="transmembrane region" description="Helical" evidence="2">
    <location>
        <begin position="34"/>
        <end position="54"/>
    </location>
</feature>
<feature type="transmembrane region" description="Helical" evidence="2">
    <location>
        <begin position="84"/>
        <end position="104"/>
    </location>
</feature>
<feature type="transmembrane region" description="Helical" evidence="2">
    <location>
        <begin position="140"/>
        <end position="160"/>
    </location>
</feature>
<feature type="transmembrane region" description="Helical" evidence="2">
    <location>
        <begin position="164"/>
        <end position="184"/>
    </location>
</feature>
<feature type="transmembrane region" description="Helical" evidence="2">
    <location>
        <begin position="197"/>
        <end position="217"/>
    </location>
</feature>
<feature type="transmembrane region" description="Helical" evidence="2">
    <location>
        <begin position="246"/>
        <end position="266"/>
    </location>
</feature>
<feature type="transmembrane region" description="Helical" evidence="2">
    <location>
        <begin position="316"/>
        <end position="336"/>
    </location>
</feature>
<feature type="transmembrane region" description="Helical" evidence="2">
    <location>
        <begin position="342"/>
        <end position="362"/>
    </location>
</feature>
<feature type="transmembrane region" description="Helical" evidence="2">
    <location>
        <begin position="371"/>
        <end position="391"/>
    </location>
</feature>
<feature type="transmembrane region" description="Helical" evidence="2">
    <location>
        <begin position="420"/>
        <end position="440"/>
    </location>
</feature>
<feature type="transmembrane region" description="Helical" evidence="2">
    <location>
        <begin position="447"/>
        <end position="467"/>
    </location>
</feature>
<feature type="transmembrane region" description="Helical" evidence="2">
    <location>
        <begin position="492"/>
        <end position="512"/>
    </location>
</feature>
<feature type="region of interest" description="Disordered" evidence="3">
    <location>
        <begin position="113"/>
        <end position="135"/>
    </location>
</feature>
<feature type="region of interest" description="Disordered" evidence="3">
    <location>
        <begin position="527"/>
        <end position="553"/>
    </location>
</feature>
<feature type="compositionally biased region" description="Low complexity" evidence="3">
    <location>
        <begin position="531"/>
        <end position="544"/>
    </location>
</feature>